<accession>A9BXZ7</accession>
<proteinExistence type="inferred from homology"/>
<reference key="1">
    <citation type="submission" date="2007-11" db="EMBL/GenBank/DDBJ databases">
        <title>Complete sequence of Delftia acidovorans DSM 14801 / SPH-1.</title>
        <authorList>
            <person name="Copeland A."/>
            <person name="Lucas S."/>
            <person name="Lapidus A."/>
            <person name="Barry K."/>
            <person name="Glavina del Rio T."/>
            <person name="Dalin E."/>
            <person name="Tice H."/>
            <person name="Pitluck S."/>
            <person name="Lowry S."/>
            <person name="Clum A."/>
            <person name="Schmutz J."/>
            <person name="Larimer F."/>
            <person name="Land M."/>
            <person name="Hauser L."/>
            <person name="Kyrpides N."/>
            <person name="Kim E."/>
            <person name="Schleheck D."/>
            <person name="Richardson P."/>
        </authorList>
    </citation>
    <scope>NUCLEOTIDE SEQUENCE [LARGE SCALE GENOMIC DNA]</scope>
    <source>
        <strain>DSM 14801 / SPH-1</strain>
    </source>
</reference>
<gene>
    <name evidence="1" type="primary">glyQ</name>
    <name type="ordered locus">Daci_1288</name>
</gene>
<organism>
    <name type="scientific">Delftia acidovorans (strain DSM 14801 / SPH-1)</name>
    <dbReference type="NCBI Taxonomy" id="398578"/>
    <lineage>
        <taxon>Bacteria</taxon>
        <taxon>Pseudomonadati</taxon>
        <taxon>Pseudomonadota</taxon>
        <taxon>Betaproteobacteria</taxon>
        <taxon>Burkholderiales</taxon>
        <taxon>Comamonadaceae</taxon>
        <taxon>Delftia</taxon>
    </lineage>
</organism>
<comment type="catalytic activity">
    <reaction evidence="1">
        <text>tRNA(Gly) + glycine + ATP = glycyl-tRNA(Gly) + AMP + diphosphate</text>
        <dbReference type="Rhea" id="RHEA:16013"/>
        <dbReference type="Rhea" id="RHEA-COMP:9664"/>
        <dbReference type="Rhea" id="RHEA-COMP:9683"/>
        <dbReference type="ChEBI" id="CHEBI:30616"/>
        <dbReference type="ChEBI" id="CHEBI:33019"/>
        <dbReference type="ChEBI" id="CHEBI:57305"/>
        <dbReference type="ChEBI" id="CHEBI:78442"/>
        <dbReference type="ChEBI" id="CHEBI:78522"/>
        <dbReference type="ChEBI" id="CHEBI:456215"/>
        <dbReference type="EC" id="6.1.1.14"/>
    </reaction>
</comment>
<comment type="subunit">
    <text evidence="1">Tetramer of two alpha and two beta subunits.</text>
</comment>
<comment type="subcellular location">
    <subcellularLocation>
        <location evidence="1">Cytoplasm</location>
    </subcellularLocation>
</comment>
<comment type="similarity">
    <text evidence="1">Belongs to the class-II aminoacyl-tRNA synthetase family.</text>
</comment>
<name>SYGA_DELAS</name>
<feature type="chain" id="PRO_1000101182" description="Glycine--tRNA ligase alpha subunit">
    <location>
        <begin position="1"/>
        <end position="312"/>
    </location>
</feature>
<protein>
    <recommendedName>
        <fullName evidence="1">Glycine--tRNA ligase alpha subunit</fullName>
        <ecNumber evidence="1">6.1.1.14</ecNumber>
    </recommendedName>
    <alternativeName>
        <fullName evidence="1">Glycyl-tRNA synthetase alpha subunit</fullName>
        <shortName evidence="1">GlyRS</shortName>
    </alternativeName>
</protein>
<evidence type="ECO:0000255" key="1">
    <source>
        <dbReference type="HAMAP-Rule" id="MF_00254"/>
    </source>
</evidence>
<keyword id="KW-0030">Aminoacyl-tRNA synthetase</keyword>
<keyword id="KW-0067">ATP-binding</keyword>
<keyword id="KW-0963">Cytoplasm</keyword>
<keyword id="KW-0436">Ligase</keyword>
<keyword id="KW-0547">Nucleotide-binding</keyword>
<keyword id="KW-0648">Protein biosynthesis</keyword>
<keyword id="KW-1185">Reference proteome</keyword>
<dbReference type="EC" id="6.1.1.14" evidence="1"/>
<dbReference type="EMBL" id="CP000884">
    <property type="protein sequence ID" value="ABX33932.1"/>
    <property type="molecule type" value="Genomic_DNA"/>
</dbReference>
<dbReference type="RefSeq" id="WP_012203218.1">
    <property type="nucleotide sequence ID" value="NC_010002.1"/>
</dbReference>
<dbReference type="SMR" id="A9BXZ7"/>
<dbReference type="STRING" id="398578.Daci_1288"/>
<dbReference type="GeneID" id="24117814"/>
<dbReference type="KEGG" id="dac:Daci_1288"/>
<dbReference type="eggNOG" id="COG0752">
    <property type="taxonomic scope" value="Bacteria"/>
</dbReference>
<dbReference type="HOGENOM" id="CLU_057066_1_0_4"/>
<dbReference type="Proteomes" id="UP000000784">
    <property type="component" value="Chromosome"/>
</dbReference>
<dbReference type="GO" id="GO:0005829">
    <property type="term" value="C:cytosol"/>
    <property type="evidence" value="ECO:0007669"/>
    <property type="project" value="TreeGrafter"/>
</dbReference>
<dbReference type="GO" id="GO:0005524">
    <property type="term" value="F:ATP binding"/>
    <property type="evidence" value="ECO:0007669"/>
    <property type="project" value="UniProtKB-UniRule"/>
</dbReference>
<dbReference type="GO" id="GO:0004820">
    <property type="term" value="F:glycine-tRNA ligase activity"/>
    <property type="evidence" value="ECO:0007669"/>
    <property type="project" value="UniProtKB-UniRule"/>
</dbReference>
<dbReference type="GO" id="GO:0006426">
    <property type="term" value="P:glycyl-tRNA aminoacylation"/>
    <property type="evidence" value="ECO:0007669"/>
    <property type="project" value="UniProtKB-UniRule"/>
</dbReference>
<dbReference type="CDD" id="cd00733">
    <property type="entry name" value="GlyRS_alpha_core"/>
    <property type="match status" value="1"/>
</dbReference>
<dbReference type="FunFam" id="3.30.930.10:FF:000006">
    <property type="entry name" value="Glycine--tRNA ligase alpha subunit"/>
    <property type="match status" value="1"/>
</dbReference>
<dbReference type="Gene3D" id="3.30.930.10">
    <property type="entry name" value="Bira Bifunctional Protein, Domain 2"/>
    <property type="match status" value="1"/>
</dbReference>
<dbReference type="Gene3D" id="1.20.58.180">
    <property type="entry name" value="Class II aaRS and biotin synthetases, domain 2"/>
    <property type="match status" value="1"/>
</dbReference>
<dbReference type="HAMAP" id="MF_00254">
    <property type="entry name" value="Gly_tRNA_synth_alpha"/>
    <property type="match status" value="1"/>
</dbReference>
<dbReference type="InterPro" id="IPR045864">
    <property type="entry name" value="aa-tRNA-synth_II/BPL/LPL"/>
</dbReference>
<dbReference type="InterPro" id="IPR006194">
    <property type="entry name" value="Gly-tRNA-synth_heterodimer"/>
</dbReference>
<dbReference type="InterPro" id="IPR002310">
    <property type="entry name" value="Gly-tRNA_ligase_asu"/>
</dbReference>
<dbReference type="NCBIfam" id="TIGR00388">
    <property type="entry name" value="glyQ"/>
    <property type="match status" value="1"/>
</dbReference>
<dbReference type="NCBIfam" id="NF006827">
    <property type="entry name" value="PRK09348.1"/>
    <property type="match status" value="1"/>
</dbReference>
<dbReference type="PANTHER" id="PTHR30075:SF2">
    <property type="entry name" value="GLYCINE--TRNA LIGASE, CHLOROPLASTIC_MITOCHONDRIAL 2"/>
    <property type="match status" value="1"/>
</dbReference>
<dbReference type="PANTHER" id="PTHR30075">
    <property type="entry name" value="GLYCYL-TRNA SYNTHETASE"/>
    <property type="match status" value="1"/>
</dbReference>
<dbReference type="Pfam" id="PF02091">
    <property type="entry name" value="tRNA-synt_2e"/>
    <property type="match status" value="1"/>
</dbReference>
<dbReference type="PRINTS" id="PR01044">
    <property type="entry name" value="TRNASYNTHGA"/>
</dbReference>
<dbReference type="SUPFAM" id="SSF55681">
    <property type="entry name" value="Class II aaRS and biotin synthetases"/>
    <property type="match status" value="1"/>
</dbReference>
<dbReference type="PROSITE" id="PS50861">
    <property type="entry name" value="AA_TRNA_LIGASE_II_GLYAB"/>
    <property type="match status" value="1"/>
</dbReference>
<sequence length="312" mass="35062">MLTFQQIILKLQSYWADQGCALLQPYDMEVGAGTSHTATFLRALGPEPWKAAYVQPSRRPKDGRYGDNPNRLQHYYQFQVVLKPAPDNILELYLGSLEALGFDLKKNDIRFVEDDWENPTLGAWGLGWEVWLNGMEVTQFTYFQQVGGIDCKPATGEITYGLERLAMYLQGVDNVYNLTWTDGLSYGDVYHQNEVEQSTYNFEHSDADFLFTAFGAYEKQANHLIGEQLALPAYEQVLKAAHTFNLLDARGAISVTERAAYIGRIRNLARAVAKAYMDSRARLGFPMAPKAHADEVLAELAKAAEQQGKKAA</sequence>